<dbReference type="EC" id="6.3.4.-" evidence="1"/>
<dbReference type="EMBL" id="FM242711">
    <property type="protein sequence ID" value="CAS05829.1"/>
    <property type="molecule type" value="Genomic_DNA"/>
</dbReference>
<dbReference type="RefSeq" id="WP_012681389.1">
    <property type="nucleotide sequence ID" value="NC_012488.1"/>
</dbReference>
<dbReference type="SMR" id="C1KX02"/>
<dbReference type="KEGG" id="lmc:Lm4b_02070"/>
<dbReference type="HOGENOM" id="CLU_038915_0_2_9"/>
<dbReference type="GO" id="GO:0005737">
    <property type="term" value="C:cytoplasm"/>
    <property type="evidence" value="ECO:0007669"/>
    <property type="project" value="UniProtKB-SubCell"/>
</dbReference>
<dbReference type="GO" id="GO:0005524">
    <property type="term" value="F:ATP binding"/>
    <property type="evidence" value="ECO:0007669"/>
    <property type="project" value="UniProtKB-KW"/>
</dbReference>
<dbReference type="GO" id="GO:0016879">
    <property type="term" value="F:ligase activity, forming carbon-nitrogen bonds"/>
    <property type="evidence" value="ECO:0007669"/>
    <property type="project" value="UniProtKB-UniRule"/>
</dbReference>
<dbReference type="GO" id="GO:0000049">
    <property type="term" value="F:tRNA binding"/>
    <property type="evidence" value="ECO:0007669"/>
    <property type="project" value="UniProtKB-KW"/>
</dbReference>
<dbReference type="GO" id="GO:0006400">
    <property type="term" value="P:tRNA modification"/>
    <property type="evidence" value="ECO:0007669"/>
    <property type="project" value="UniProtKB-UniRule"/>
</dbReference>
<dbReference type="Gene3D" id="3.40.50.620">
    <property type="entry name" value="HUPs"/>
    <property type="match status" value="1"/>
</dbReference>
<dbReference type="HAMAP" id="MF_01539">
    <property type="entry name" value="TmcAL"/>
    <property type="match status" value="1"/>
</dbReference>
<dbReference type="InterPro" id="IPR014729">
    <property type="entry name" value="Rossmann-like_a/b/a_fold"/>
</dbReference>
<dbReference type="InterPro" id="IPR008513">
    <property type="entry name" value="tRNA(Met)_cyd_acetate_ligase"/>
</dbReference>
<dbReference type="NCBIfam" id="NF010191">
    <property type="entry name" value="PRK13670.1"/>
    <property type="match status" value="1"/>
</dbReference>
<dbReference type="PANTHER" id="PTHR37825">
    <property type="entry name" value="TRNA(MET) CYTIDINE ACETATE LIGASE"/>
    <property type="match status" value="1"/>
</dbReference>
<dbReference type="PANTHER" id="PTHR37825:SF1">
    <property type="entry name" value="TRNA(MET) CYTIDINE ACETATE LIGASE"/>
    <property type="match status" value="1"/>
</dbReference>
<dbReference type="Pfam" id="PF05636">
    <property type="entry name" value="HIGH_NTase1"/>
    <property type="match status" value="1"/>
</dbReference>
<dbReference type="SUPFAM" id="SSF52374">
    <property type="entry name" value="Nucleotidylyl transferase"/>
    <property type="match status" value="1"/>
</dbReference>
<keyword id="KW-0067">ATP-binding</keyword>
<keyword id="KW-0963">Cytoplasm</keyword>
<keyword id="KW-0436">Ligase</keyword>
<keyword id="KW-0547">Nucleotide-binding</keyword>
<keyword id="KW-0694">RNA-binding</keyword>
<keyword id="KW-0819">tRNA processing</keyword>
<keyword id="KW-0820">tRNA-binding</keyword>
<reference key="1">
    <citation type="journal article" date="2012" name="BMC Genomics">
        <title>Comparative genomics and transcriptomics of lineages I, II, and III strains of Listeria monocytogenes.</title>
        <authorList>
            <person name="Hain T."/>
            <person name="Ghai R."/>
            <person name="Billion A."/>
            <person name="Kuenne C.T."/>
            <person name="Steinweg C."/>
            <person name="Izar B."/>
            <person name="Mohamed W."/>
            <person name="Mraheil M."/>
            <person name="Domann E."/>
            <person name="Schaffrath S."/>
            <person name="Karst U."/>
            <person name="Goesmann A."/>
            <person name="Oehm S."/>
            <person name="Puhler A."/>
            <person name="Merkl R."/>
            <person name="Vorwerk S."/>
            <person name="Glaser P."/>
            <person name="Garrido P."/>
            <person name="Rusniok C."/>
            <person name="Buchrieser C."/>
            <person name="Goebel W."/>
            <person name="Chakraborty T."/>
        </authorList>
    </citation>
    <scope>NUCLEOTIDE SEQUENCE [LARGE SCALE GENOMIC DNA]</scope>
    <source>
        <strain>CLIP80459</strain>
    </source>
</reference>
<evidence type="ECO:0000255" key="1">
    <source>
        <dbReference type="HAMAP-Rule" id="MF_01539"/>
    </source>
</evidence>
<name>TMCAL_LISMC</name>
<sequence>MKATGIVVEYNPFHNGHKLHLNKARELTQADVVIAVMSGSFVQRGEPAILPKWERTRMALAAGVDMVVELPVSFATQHATIFAEEAVRILDAIHVDTLFFGSEHGVAEDFTLAAKKVVENEARFDEAIQLALVDKKTSYARAYTEAFKKLFGQNLLDITKPNNILGFHYALAAQKQNPSISLHSIPREHAGYHDEEANHDQIASATAIRKLILAGKLEEASHYLPASSIAILRNYEGPFLSWTDYWSFLQYRLIQAGSEELEGIRGVSEGIQNRMQQAATKAQNFSDFIELTKTKRYSNARLQRTALQILLNARSQTSSPYIRILGMNKTGQQYLSLHKKNISLPIITTVSKAPAGLLEEELRATNIYTLAKGLENYQAGDFHIPPILTL</sequence>
<organism>
    <name type="scientific">Listeria monocytogenes serotype 4b (strain CLIP80459)</name>
    <dbReference type="NCBI Taxonomy" id="568819"/>
    <lineage>
        <taxon>Bacteria</taxon>
        <taxon>Bacillati</taxon>
        <taxon>Bacillota</taxon>
        <taxon>Bacilli</taxon>
        <taxon>Bacillales</taxon>
        <taxon>Listeriaceae</taxon>
        <taxon>Listeria</taxon>
    </lineage>
</organism>
<gene>
    <name evidence="1" type="primary">tmcAL</name>
    <name type="ordered locus">Lm4b_02070</name>
</gene>
<protein>
    <recommendedName>
        <fullName evidence="1">tRNA(Met) cytidine acetate ligase</fullName>
        <ecNumber evidence="1">6.3.4.-</ecNumber>
    </recommendedName>
</protein>
<proteinExistence type="inferred from homology"/>
<accession>C1KX02</accession>
<feature type="chain" id="PRO_1000215429" description="tRNA(Met) cytidine acetate ligase">
    <location>
        <begin position="1"/>
        <end position="390"/>
    </location>
</feature>
<feature type="binding site" evidence="1">
    <location>
        <begin position="7"/>
        <end position="20"/>
    </location>
    <ligand>
        <name>ATP</name>
        <dbReference type="ChEBI" id="CHEBI:30616"/>
    </ligand>
</feature>
<feature type="binding site" evidence="1">
    <location>
        <position position="101"/>
    </location>
    <ligand>
        <name>ATP</name>
        <dbReference type="ChEBI" id="CHEBI:30616"/>
    </ligand>
</feature>
<feature type="binding site" evidence="1">
    <location>
        <position position="162"/>
    </location>
    <ligand>
        <name>ATP</name>
        <dbReference type="ChEBI" id="CHEBI:30616"/>
    </ligand>
</feature>
<feature type="binding site" evidence="1">
    <location>
        <position position="187"/>
    </location>
    <ligand>
        <name>ATP</name>
        <dbReference type="ChEBI" id="CHEBI:30616"/>
    </ligand>
</feature>
<comment type="function">
    <text evidence="1">Catalyzes the formation of N(4)-acetylcytidine (ac(4)C) at the wobble position of elongator tRNA(Met), using acetate and ATP as substrates. First activates an acetate ion to form acetyladenylate (Ac-AMP) and then transfers the acetyl group to tRNA to form ac(4)C34.</text>
</comment>
<comment type="catalytic activity">
    <reaction evidence="1">
        <text>cytidine(34) in elongator tRNA(Met) + acetate + ATP = N(4)-acetylcytidine(34) in elongator tRNA(Met) + AMP + diphosphate</text>
        <dbReference type="Rhea" id="RHEA:58144"/>
        <dbReference type="Rhea" id="RHEA-COMP:10693"/>
        <dbReference type="Rhea" id="RHEA-COMP:10694"/>
        <dbReference type="ChEBI" id="CHEBI:30089"/>
        <dbReference type="ChEBI" id="CHEBI:30616"/>
        <dbReference type="ChEBI" id="CHEBI:33019"/>
        <dbReference type="ChEBI" id="CHEBI:74900"/>
        <dbReference type="ChEBI" id="CHEBI:82748"/>
        <dbReference type="ChEBI" id="CHEBI:456215"/>
    </reaction>
</comment>
<comment type="subcellular location">
    <subcellularLocation>
        <location evidence="1">Cytoplasm</location>
    </subcellularLocation>
</comment>
<comment type="similarity">
    <text evidence="1">Belongs to the TmcAL family.</text>
</comment>